<reference key="1">
    <citation type="journal article" date="2009" name="PLoS Genet.">
        <title>Organised genome dynamics in the Escherichia coli species results in highly diverse adaptive paths.</title>
        <authorList>
            <person name="Touchon M."/>
            <person name="Hoede C."/>
            <person name="Tenaillon O."/>
            <person name="Barbe V."/>
            <person name="Baeriswyl S."/>
            <person name="Bidet P."/>
            <person name="Bingen E."/>
            <person name="Bonacorsi S."/>
            <person name="Bouchier C."/>
            <person name="Bouvet O."/>
            <person name="Calteau A."/>
            <person name="Chiapello H."/>
            <person name="Clermont O."/>
            <person name="Cruveiller S."/>
            <person name="Danchin A."/>
            <person name="Diard M."/>
            <person name="Dossat C."/>
            <person name="Karoui M.E."/>
            <person name="Frapy E."/>
            <person name="Garry L."/>
            <person name="Ghigo J.M."/>
            <person name="Gilles A.M."/>
            <person name="Johnson J."/>
            <person name="Le Bouguenec C."/>
            <person name="Lescat M."/>
            <person name="Mangenot S."/>
            <person name="Martinez-Jehanne V."/>
            <person name="Matic I."/>
            <person name="Nassif X."/>
            <person name="Oztas S."/>
            <person name="Petit M.A."/>
            <person name="Pichon C."/>
            <person name="Rouy Z."/>
            <person name="Ruf C.S."/>
            <person name="Schneider D."/>
            <person name="Tourret J."/>
            <person name="Vacherie B."/>
            <person name="Vallenet D."/>
            <person name="Medigue C."/>
            <person name="Rocha E.P.C."/>
            <person name="Denamur E."/>
        </authorList>
    </citation>
    <scope>NUCLEOTIDE SEQUENCE [LARGE SCALE GENOMIC DNA]</scope>
    <source>
        <strain>IAI1</strain>
    </source>
</reference>
<accession>B7M1L9</accession>
<name>RL6_ECO8A</name>
<sequence length="177" mass="18904">MSRVAKAPVVVPAGVDVKINGQVITIKGKNGELTRTLNDAVEVKHADNTLTFGPRDGYADGWAQAGTARALLNSMVIGVTEGFTKKLQLVGVGYRAAVKGNVINLSLGFSHPVDHQLPAGITAECPTQTEIVLKGADKQVIGQVAADLRAYRRPEPYKGKGVRYADEVVRTKEAKKK</sequence>
<comment type="function">
    <text evidence="1">This protein binds to the 23S rRNA, and is important in its secondary structure. It is located near the subunit interface in the base of the L7/L12 stalk, and near the tRNA binding site of the peptidyltransferase center.</text>
</comment>
<comment type="subunit">
    <text evidence="1">Part of the 50S ribosomal subunit.</text>
</comment>
<comment type="similarity">
    <text evidence="1">Belongs to the universal ribosomal protein uL6 family.</text>
</comment>
<organism>
    <name type="scientific">Escherichia coli O8 (strain IAI1)</name>
    <dbReference type="NCBI Taxonomy" id="585034"/>
    <lineage>
        <taxon>Bacteria</taxon>
        <taxon>Pseudomonadati</taxon>
        <taxon>Pseudomonadota</taxon>
        <taxon>Gammaproteobacteria</taxon>
        <taxon>Enterobacterales</taxon>
        <taxon>Enterobacteriaceae</taxon>
        <taxon>Escherichia</taxon>
    </lineage>
</organism>
<proteinExistence type="inferred from homology"/>
<keyword id="KW-0007">Acetylation</keyword>
<keyword id="KW-0687">Ribonucleoprotein</keyword>
<keyword id="KW-0689">Ribosomal protein</keyword>
<keyword id="KW-0694">RNA-binding</keyword>
<keyword id="KW-0699">rRNA-binding</keyword>
<protein>
    <recommendedName>
        <fullName evidence="1">Large ribosomal subunit protein uL6</fullName>
    </recommendedName>
    <alternativeName>
        <fullName evidence="2">50S ribosomal protein L6</fullName>
    </alternativeName>
</protein>
<dbReference type="EMBL" id="CU928160">
    <property type="protein sequence ID" value="CAR00256.1"/>
    <property type="molecule type" value="Genomic_DNA"/>
</dbReference>
<dbReference type="RefSeq" id="WP_000091945.1">
    <property type="nucleotide sequence ID" value="NC_011741.1"/>
</dbReference>
<dbReference type="SMR" id="B7M1L9"/>
<dbReference type="GeneID" id="86948169"/>
<dbReference type="KEGG" id="ecr:ECIAI1_3454"/>
<dbReference type="HOGENOM" id="CLU_065464_1_2_6"/>
<dbReference type="GO" id="GO:0022625">
    <property type="term" value="C:cytosolic large ribosomal subunit"/>
    <property type="evidence" value="ECO:0007669"/>
    <property type="project" value="TreeGrafter"/>
</dbReference>
<dbReference type="GO" id="GO:0019843">
    <property type="term" value="F:rRNA binding"/>
    <property type="evidence" value="ECO:0007669"/>
    <property type="project" value="UniProtKB-UniRule"/>
</dbReference>
<dbReference type="GO" id="GO:0003735">
    <property type="term" value="F:structural constituent of ribosome"/>
    <property type="evidence" value="ECO:0007669"/>
    <property type="project" value="InterPro"/>
</dbReference>
<dbReference type="GO" id="GO:0002181">
    <property type="term" value="P:cytoplasmic translation"/>
    <property type="evidence" value="ECO:0007669"/>
    <property type="project" value="TreeGrafter"/>
</dbReference>
<dbReference type="FunFam" id="3.90.930.12:FF:000001">
    <property type="entry name" value="50S ribosomal protein L6"/>
    <property type="match status" value="1"/>
</dbReference>
<dbReference type="FunFam" id="3.90.930.12:FF:000002">
    <property type="entry name" value="50S ribosomal protein L6"/>
    <property type="match status" value="1"/>
</dbReference>
<dbReference type="Gene3D" id="3.90.930.12">
    <property type="entry name" value="Ribosomal protein L6, alpha-beta domain"/>
    <property type="match status" value="2"/>
</dbReference>
<dbReference type="HAMAP" id="MF_01365_B">
    <property type="entry name" value="Ribosomal_uL6_B"/>
    <property type="match status" value="1"/>
</dbReference>
<dbReference type="InterPro" id="IPR000702">
    <property type="entry name" value="Ribosomal_uL6-like"/>
</dbReference>
<dbReference type="InterPro" id="IPR036789">
    <property type="entry name" value="Ribosomal_uL6-like_a/b-dom_sf"/>
</dbReference>
<dbReference type="InterPro" id="IPR020040">
    <property type="entry name" value="Ribosomal_uL6_a/b-dom"/>
</dbReference>
<dbReference type="InterPro" id="IPR019906">
    <property type="entry name" value="Ribosomal_uL6_bac-type"/>
</dbReference>
<dbReference type="InterPro" id="IPR002358">
    <property type="entry name" value="Ribosomal_uL6_CS"/>
</dbReference>
<dbReference type="NCBIfam" id="TIGR03654">
    <property type="entry name" value="L6_bact"/>
    <property type="match status" value="1"/>
</dbReference>
<dbReference type="PANTHER" id="PTHR11655">
    <property type="entry name" value="60S/50S RIBOSOMAL PROTEIN L6/L9"/>
    <property type="match status" value="1"/>
</dbReference>
<dbReference type="PANTHER" id="PTHR11655:SF14">
    <property type="entry name" value="LARGE RIBOSOMAL SUBUNIT PROTEIN UL6M"/>
    <property type="match status" value="1"/>
</dbReference>
<dbReference type="Pfam" id="PF00347">
    <property type="entry name" value="Ribosomal_L6"/>
    <property type="match status" value="2"/>
</dbReference>
<dbReference type="PIRSF" id="PIRSF002162">
    <property type="entry name" value="Ribosomal_L6"/>
    <property type="match status" value="1"/>
</dbReference>
<dbReference type="PRINTS" id="PR00059">
    <property type="entry name" value="RIBOSOMALL6"/>
</dbReference>
<dbReference type="SUPFAM" id="SSF56053">
    <property type="entry name" value="Ribosomal protein L6"/>
    <property type="match status" value="2"/>
</dbReference>
<dbReference type="PROSITE" id="PS00525">
    <property type="entry name" value="RIBOSOMAL_L6_1"/>
    <property type="match status" value="1"/>
</dbReference>
<gene>
    <name evidence="1" type="primary">rplF</name>
    <name type="ordered locus">ECIAI1_3454</name>
</gene>
<evidence type="ECO:0000255" key="1">
    <source>
        <dbReference type="HAMAP-Rule" id="MF_01365"/>
    </source>
</evidence>
<evidence type="ECO:0000305" key="2"/>
<feature type="chain" id="PRO_1000143984" description="Large ribosomal subunit protein uL6">
    <location>
        <begin position="1"/>
        <end position="177"/>
    </location>
</feature>
<feature type="modified residue" description="N6-acetyllysine" evidence="1">
    <location>
        <position position="44"/>
    </location>
</feature>